<evidence type="ECO:0000255" key="1">
    <source>
        <dbReference type="HAMAP-Rule" id="MF_01082"/>
    </source>
</evidence>
<evidence type="ECO:0007829" key="2">
    <source>
        <dbReference type="PDB" id="1Z2Z"/>
    </source>
</evidence>
<accession>Q8Q0M2</accession>
<name>TRUD_METMA</name>
<keyword id="KW-0002">3D-structure</keyword>
<keyword id="KW-0413">Isomerase</keyword>
<keyword id="KW-0819">tRNA processing</keyword>
<reference key="1">
    <citation type="journal article" date="2002" name="J. Mol. Microbiol. Biotechnol.">
        <title>The genome of Methanosarcina mazei: evidence for lateral gene transfer between Bacteria and Archaea.</title>
        <authorList>
            <person name="Deppenmeier U."/>
            <person name="Johann A."/>
            <person name="Hartsch T."/>
            <person name="Merkl R."/>
            <person name="Schmitz R.A."/>
            <person name="Martinez-Arias R."/>
            <person name="Henne A."/>
            <person name="Wiezer A."/>
            <person name="Baeumer S."/>
            <person name="Jacobi C."/>
            <person name="Brueggemann H."/>
            <person name="Lienard T."/>
            <person name="Christmann A."/>
            <person name="Boemecke M."/>
            <person name="Steckel S."/>
            <person name="Bhattacharyya A."/>
            <person name="Lykidis A."/>
            <person name="Overbeek R."/>
            <person name="Klenk H.-P."/>
            <person name="Gunsalus R.P."/>
            <person name="Fritz H.-J."/>
            <person name="Gottschalk G."/>
        </authorList>
    </citation>
    <scope>NUCLEOTIDE SEQUENCE [LARGE SCALE GENOMIC DNA]</scope>
    <source>
        <strain>ATCC BAA-159 / DSM 3647 / Goe1 / Go1 / JCM 11833 / OCM 88</strain>
    </source>
</reference>
<comment type="function">
    <text evidence="1">Could be responsible for synthesis of pseudouridine from uracil-13 in transfer RNAs.</text>
</comment>
<comment type="catalytic activity">
    <reaction evidence="1">
        <text>uridine(13) in tRNA = pseudouridine(13) in tRNA</text>
        <dbReference type="Rhea" id="RHEA:42540"/>
        <dbReference type="Rhea" id="RHEA-COMP:10105"/>
        <dbReference type="Rhea" id="RHEA-COMP:10106"/>
        <dbReference type="ChEBI" id="CHEBI:65314"/>
        <dbReference type="ChEBI" id="CHEBI:65315"/>
        <dbReference type="EC" id="5.4.99.27"/>
    </reaction>
</comment>
<comment type="similarity">
    <text evidence="1">Belongs to the pseudouridine synthase TruD family.</text>
</comment>
<proteinExistence type="evidence at protein level"/>
<protein>
    <recommendedName>
        <fullName evidence="1">Probable tRNA pseudouridine synthase D</fullName>
        <ecNumber evidence="1">5.4.99.27</ecNumber>
    </recommendedName>
    <alternativeName>
        <fullName evidence="1">tRNA pseudouridine(13) synthase</fullName>
    </alternativeName>
    <alternativeName>
        <fullName evidence="1">tRNA pseudouridylate synthase D</fullName>
    </alternativeName>
    <alternativeName>
        <fullName evidence="1">tRNA-uridine isomerase D</fullName>
    </alternativeName>
</protein>
<gene>
    <name evidence="1" type="primary">truD</name>
    <name type="ordered locus">MM_0114</name>
</gene>
<sequence>MEVPEIEKQIGINLYSTDTTGLGGQLRQEIEDFIVKEITNREEGEEGKYLIVELTKRDWDTHHLTRTLSRILQVSQKRISVAGTKDKRALTTQKISIFDTDASEIEKIHLKDIELKVLGRSRKSVELGDLWGNDFRITVRNIENSPEETEALLKKTTDEILAQGGVPNFFGIQRFGSVRPVTHLVGKAIVEGNFEKAALLYIAEPFPEEPEETKNARQFVKDTLDFKEGLKTYPLRLGHERAMMNHLIANPEDYSGSFRVLPQNLYRMFVHGYQSYIYNIILCRRIEAGIPLNRAVEGDIVCFRNEVGLPDSSKTEKVTSETVNAMNRLLKLGRAFITAPLPGYNTEFASGIPGEIENGVLKELGVSLEGFNIEKFPEMSSKGTRREVLLEVKPKFEAGEDELNPGKSKAVLEFMLPKGSYATTVLREYMKVNPLQMS</sequence>
<dbReference type="EC" id="5.4.99.27" evidence="1"/>
<dbReference type="EMBL" id="AE008384">
    <property type="protein sequence ID" value="AAM29810.1"/>
    <property type="molecule type" value="Genomic_DNA"/>
</dbReference>
<dbReference type="RefSeq" id="WP_011032068.1">
    <property type="nucleotide sequence ID" value="NC_003901.1"/>
</dbReference>
<dbReference type="PDB" id="1Z2Z">
    <property type="method" value="X-ray"/>
    <property type="resolution" value="2.60 A"/>
    <property type="chains" value="A/B=1-438"/>
</dbReference>
<dbReference type="PDBsum" id="1Z2Z"/>
<dbReference type="SMR" id="Q8Q0M2"/>
<dbReference type="GeneID" id="82159078"/>
<dbReference type="KEGG" id="mma:MM_0114"/>
<dbReference type="PATRIC" id="fig|192952.21.peg.127"/>
<dbReference type="eggNOG" id="arCOG04252">
    <property type="taxonomic scope" value="Archaea"/>
</dbReference>
<dbReference type="HOGENOM" id="CLU_005281_4_1_2"/>
<dbReference type="EvolutionaryTrace" id="Q8Q0M2"/>
<dbReference type="Proteomes" id="UP000000595">
    <property type="component" value="Chromosome"/>
</dbReference>
<dbReference type="GO" id="GO:0003723">
    <property type="term" value="F:RNA binding"/>
    <property type="evidence" value="ECO:0007669"/>
    <property type="project" value="InterPro"/>
</dbReference>
<dbReference type="GO" id="GO:0160150">
    <property type="term" value="F:tRNA pseudouridine(13) synthase activity"/>
    <property type="evidence" value="ECO:0007669"/>
    <property type="project" value="UniProtKB-EC"/>
</dbReference>
<dbReference type="GO" id="GO:0031119">
    <property type="term" value="P:tRNA pseudouridine synthesis"/>
    <property type="evidence" value="ECO:0007669"/>
    <property type="project" value="UniProtKB-UniRule"/>
</dbReference>
<dbReference type="CDD" id="cd02577">
    <property type="entry name" value="PSTD1"/>
    <property type="match status" value="1"/>
</dbReference>
<dbReference type="FunFam" id="3.30.2350.20:FF:000023">
    <property type="entry name" value="Probable tRNA pseudouridine synthase D"/>
    <property type="match status" value="1"/>
</dbReference>
<dbReference type="FunFam" id="3.30.70.3160:FF:000001">
    <property type="entry name" value="Probable tRNA pseudouridine synthase D"/>
    <property type="match status" value="1"/>
</dbReference>
<dbReference type="Gene3D" id="1.10.1510.30">
    <property type="match status" value="1"/>
</dbReference>
<dbReference type="Gene3D" id="3.30.70.3160">
    <property type="match status" value="1"/>
</dbReference>
<dbReference type="Gene3D" id="3.30.2350.20">
    <property type="entry name" value="TruD, catalytic domain"/>
    <property type="match status" value="1"/>
</dbReference>
<dbReference type="HAMAP" id="MF_01082">
    <property type="entry name" value="TruD"/>
    <property type="match status" value="1"/>
</dbReference>
<dbReference type="InterPro" id="IPR020103">
    <property type="entry name" value="PsdUridine_synth_cat_dom_sf"/>
</dbReference>
<dbReference type="InterPro" id="IPR001656">
    <property type="entry name" value="PsdUridine_synth_TruD"/>
</dbReference>
<dbReference type="InterPro" id="IPR020119">
    <property type="entry name" value="PsdUridine_synth_TruD_CS"/>
</dbReference>
<dbReference type="InterPro" id="IPR011760">
    <property type="entry name" value="PsdUridine_synth_TruD_insert"/>
</dbReference>
<dbReference type="InterPro" id="IPR042214">
    <property type="entry name" value="TruD_catalytic"/>
</dbReference>
<dbReference type="NCBIfam" id="TIGR00094">
    <property type="entry name" value="tRNA_TruD_broad"/>
    <property type="match status" value="1"/>
</dbReference>
<dbReference type="PANTHER" id="PTHR13326:SF21">
    <property type="entry name" value="PSEUDOURIDYLATE SYNTHASE PUS7L"/>
    <property type="match status" value="1"/>
</dbReference>
<dbReference type="PANTHER" id="PTHR13326">
    <property type="entry name" value="TRNA PSEUDOURIDINE SYNTHASE D"/>
    <property type="match status" value="1"/>
</dbReference>
<dbReference type="Pfam" id="PF01142">
    <property type="entry name" value="TruD"/>
    <property type="match status" value="1"/>
</dbReference>
<dbReference type="PIRSF" id="PIRSF037016">
    <property type="entry name" value="Pseudouridin_synth_euk_prd"/>
    <property type="match status" value="1"/>
</dbReference>
<dbReference type="SUPFAM" id="SSF55120">
    <property type="entry name" value="Pseudouridine synthase"/>
    <property type="match status" value="1"/>
</dbReference>
<dbReference type="PROSITE" id="PS50984">
    <property type="entry name" value="TRUD"/>
    <property type="match status" value="1"/>
</dbReference>
<dbReference type="PROSITE" id="PS01268">
    <property type="entry name" value="UPF0024"/>
    <property type="match status" value="1"/>
</dbReference>
<feature type="chain" id="PRO_0000152543" description="Probable tRNA pseudouridine synthase D">
    <location>
        <begin position="1"/>
        <end position="438"/>
    </location>
</feature>
<feature type="domain" description="TRUD" evidence="1">
    <location>
        <begin position="165"/>
        <end position="390"/>
    </location>
</feature>
<feature type="active site" description="Nucleophile" evidence="1">
    <location>
        <position position="86"/>
    </location>
</feature>
<feature type="helix" evidence="2">
    <location>
        <begin position="5"/>
        <end position="8"/>
    </location>
</feature>
<feature type="turn" evidence="2">
    <location>
        <begin position="9"/>
        <end position="11"/>
    </location>
</feature>
<feature type="helix" evidence="2">
    <location>
        <begin position="30"/>
        <end position="32"/>
    </location>
</feature>
<feature type="strand" evidence="2">
    <location>
        <begin position="33"/>
        <end position="39"/>
    </location>
</feature>
<feature type="strand" evidence="2">
    <location>
        <begin position="47"/>
        <end position="58"/>
    </location>
</feature>
<feature type="helix" evidence="2">
    <location>
        <begin position="61"/>
        <end position="72"/>
    </location>
</feature>
<feature type="helix" evidence="2">
    <location>
        <begin position="76"/>
        <end position="78"/>
    </location>
</feature>
<feature type="strand" evidence="2">
    <location>
        <begin position="79"/>
        <end position="83"/>
    </location>
</feature>
<feature type="strand" evidence="2">
    <location>
        <begin position="87"/>
        <end position="98"/>
    </location>
</feature>
<feature type="helix" evidence="2">
    <location>
        <begin position="102"/>
        <end position="105"/>
    </location>
</feature>
<feature type="strand" evidence="2">
    <location>
        <begin position="113"/>
        <end position="123"/>
    </location>
</feature>
<feature type="strand" evidence="2">
    <location>
        <begin position="130"/>
        <end position="144"/>
    </location>
</feature>
<feature type="helix" evidence="2">
    <location>
        <begin position="146"/>
        <end position="163"/>
    </location>
</feature>
<feature type="strand" evidence="2">
    <location>
        <begin position="165"/>
        <end position="167"/>
    </location>
</feature>
<feature type="turn" evidence="2">
    <location>
        <begin position="172"/>
        <end position="175"/>
    </location>
</feature>
<feature type="strand" evidence="2">
    <location>
        <begin position="177"/>
        <end position="179"/>
    </location>
</feature>
<feature type="helix" evidence="2">
    <location>
        <begin position="182"/>
        <end position="191"/>
    </location>
</feature>
<feature type="helix" evidence="2">
    <location>
        <begin position="194"/>
        <end position="202"/>
    </location>
</feature>
<feature type="helix" evidence="2">
    <location>
        <begin position="213"/>
        <end position="223"/>
    </location>
</feature>
<feature type="helix" evidence="2">
    <location>
        <begin position="226"/>
        <end position="232"/>
    </location>
</feature>
<feature type="helix" evidence="2">
    <location>
        <begin position="238"/>
        <end position="249"/>
    </location>
</feature>
<feature type="helix" evidence="2">
    <location>
        <begin position="254"/>
        <end position="258"/>
    </location>
</feature>
<feature type="helix" evidence="2">
    <location>
        <begin position="263"/>
        <end position="287"/>
    </location>
</feature>
<feature type="strand" evidence="2">
    <location>
        <begin position="292"/>
        <end position="294"/>
    </location>
</feature>
<feature type="strand" evidence="2">
    <location>
        <begin position="306"/>
        <end position="308"/>
    </location>
</feature>
<feature type="strand" evidence="2">
    <location>
        <begin position="312"/>
        <end position="314"/>
    </location>
</feature>
<feature type="turn" evidence="2">
    <location>
        <begin position="320"/>
        <end position="322"/>
    </location>
</feature>
<feature type="helix" evidence="2">
    <location>
        <begin position="323"/>
        <end position="330"/>
    </location>
</feature>
<feature type="turn" evidence="2">
    <location>
        <begin position="331"/>
        <end position="333"/>
    </location>
</feature>
<feature type="strand" evidence="2">
    <location>
        <begin position="336"/>
        <end position="338"/>
    </location>
</feature>
<feature type="strand" evidence="2">
    <location>
        <begin position="343"/>
        <end position="345"/>
    </location>
</feature>
<feature type="helix" evidence="2">
    <location>
        <begin position="352"/>
        <end position="363"/>
    </location>
</feature>
<feature type="helix" evidence="2">
    <location>
        <begin position="368"/>
        <end position="370"/>
    </location>
</feature>
<feature type="helix" evidence="2">
    <location>
        <begin position="377"/>
        <end position="379"/>
    </location>
</feature>
<feature type="strand" evidence="2">
    <location>
        <begin position="387"/>
        <end position="391"/>
    </location>
</feature>
<feature type="strand" evidence="2">
    <location>
        <begin position="398"/>
        <end position="400"/>
    </location>
</feature>
<feature type="strand" evidence="2">
    <location>
        <begin position="408"/>
        <end position="413"/>
    </location>
</feature>
<feature type="strand" evidence="2">
    <location>
        <begin position="415"/>
        <end position="417"/>
    </location>
</feature>
<feature type="helix" evidence="2">
    <location>
        <begin position="423"/>
        <end position="430"/>
    </location>
</feature>
<feature type="turn" evidence="2">
    <location>
        <begin position="434"/>
        <end position="436"/>
    </location>
</feature>
<organism>
    <name type="scientific">Methanosarcina mazei (strain ATCC BAA-159 / DSM 3647 / Goe1 / Go1 / JCM 11833 / OCM 88)</name>
    <name type="common">Methanosarcina frisia</name>
    <dbReference type="NCBI Taxonomy" id="192952"/>
    <lineage>
        <taxon>Archaea</taxon>
        <taxon>Methanobacteriati</taxon>
        <taxon>Methanobacteriota</taxon>
        <taxon>Stenosarchaea group</taxon>
        <taxon>Methanomicrobia</taxon>
        <taxon>Methanosarcinales</taxon>
        <taxon>Methanosarcinaceae</taxon>
        <taxon>Methanosarcina</taxon>
    </lineage>
</organism>